<comment type="subcellular location">
    <subcellularLocation>
        <location evidence="3">Membrane</location>
        <topology evidence="3">Single-pass type I membrane protein</topology>
    </subcellularLocation>
</comment>
<comment type="sequence caution" evidence="3">
    <conflict type="erroneous gene model prediction">
        <sequence resource="EMBL-CDS" id="EDV13092"/>
    </conflict>
</comment>
<sequence length="525" mass="58711">MLECLSALLVLFAGGGGSVLAAVQSKTVADPNLCPGYNSQLISPFLSSCKRNLSECVSRYFDEQYAFCRSCVTVNNETMEDLDNCKCLQCALSSLNNSCFHDYCTSKDEYDKLQIVVEQFQLTNGVLDDGEILKPRGNKFSSRKLSYFVGQNNTLFRNPLQFEKNQLISALLTSLTNNQKTISSVDMFEVVDANNEVQYLRERTISGKTLSPATGYEEENDGDCSVKDKKWEGKIEYHENKKVSSENCSKDTDDKSGSKKERNTKAPLFHTATEIHMTRWSSWRPKKIFTRYLVNEYQSPKIITTVNRFYRTKTDTETGTTLITSTKAKRRWFPRTKIVTSTATSTFLSITTTTTTNAIATKSLVAVLNPDGLNKKAGINFGLFSANGELASPDEGGTPTVVRRDKISDPGAANEQATLFSTTFSQVPHLPELDSGEFISAASQLDERIFIFTAITVSITTLMMLGFSYRSRVSFRDHSIDDSDDDNDWSDDEVEFDEEYFYSLPVSIPEKGISLDKMAQQLGVE</sequence>
<feature type="signal peptide" evidence="1">
    <location>
        <begin position="1"/>
        <end position="21"/>
    </location>
</feature>
<feature type="chain" id="PRO_0000378147" description="Uncharacterized protein SCRG_04024">
    <location>
        <begin position="22"/>
        <end position="525"/>
    </location>
</feature>
<feature type="topological domain" description="Extracellular" evidence="1">
    <location>
        <begin position="22"/>
        <end position="448"/>
    </location>
</feature>
<feature type="transmembrane region" description="Helical" evidence="1">
    <location>
        <begin position="449"/>
        <end position="469"/>
    </location>
</feature>
<feature type="topological domain" description="Cytoplasmic" evidence="1">
    <location>
        <begin position="470"/>
        <end position="525"/>
    </location>
</feature>
<feature type="region of interest" description="Disordered" evidence="2">
    <location>
        <begin position="242"/>
        <end position="264"/>
    </location>
</feature>
<reference key="1">
    <citation type="submission" date="2005-03" db="EMBL/GenBank/DDBJ databases">
        <title>Annotation of the Saccharomyces cerevisiae RM11-1a genome.</title>
        <authorList>
            <consortium name="The Broad Institute Genome Sequencing Platform"/>
            <person name="Birren B.W."/>
            <person name="Lander E.S."/>
            <person name="Galagan J.E."/>
            <person name="Nusbaum C."/>
            <person name="Devon K."/>
            <person name="Cuomo C."/>
            <person name="Jaffe D.B."/>
            <person name="Butler J."/>
            <person name="Alvarez P."/>
            <person name="Gnerre S."/>
            <person name="Grabherr M."/>
            <person name="Kleber M."/>
            <person name="Mauceli E.W."/>
            <person name="Brockman W."/>
            <person name="MacCallum I.A."/>
            <person name="Rounsley S."/>
            <person name="Young S.K."/>
            <person name="LaButti K."/>
            <person name="Pushparaj V."/>
            <person name="DeCaprio D."/>
            <person name="Crawford M."/>
            <person name="Koehrsen M."/>
            <person name="Engels R."/>
            <person name="Montgomery P."/>
            <person name="Pearson M."/>
            <person name="Howarth C."/>
            <person name="Larson L."/>
            <person name="Luoma S."/>
            <person name="White J."/>
            <person name="O'Leary S."/>
            <person name="Kodira C.D."/>
            <person name="Zeng Q."/>
            <person name="Yandava C."/>
            <person name="Alvarado L."/>
            <person name="Pratt S."/>
            <person name="Kruglyak L."/>
        </authorList>
    </citation>
    <scope>NUCLEOTIDE SEQUENCE [LARGE SCALE GENOMIC DNA]</scope>
    <source>
        <strain>RM11-1a</strain>
    </source>
</reference>
<accession>B3LR89</accession>
<protein>
    <recommendedName>
        <fullName>Uncharacterized protein SCRG_04024</fullName>
    </recommendedName>
</protein>
<name>YKY5_YEAS1</name>
<gene>
    <name type="ORF">SCRG_04024</name>
</gene>
<keyword id="KW-0472">Membrane</keyword>
<keyword id="KW-0732">Signal</keyword>
<keyword id="KW-0812">Transmembrane</keyword>
<keyword id="KW-1133">Transmembrane helix</keyword>
<dbReference type="EMBL" id="CH408051">
    <property type="protein sequence ID" value="EDV13092.1"/>
    <property type="status" value="ALT_SEQ"/>
    <property type="molecule type" value="Genomic_DNA"/>
</dbReference>
<dbReference type="HOGENOM" id="CLU_518965_0_0_1"/>
<dbReference type="OrthoDB" id="24842at4893"/>
<dbReference type="Proteomes" id="UP000008335">
    <property type="component" value="Unassembled WGS sequence"/>
</dbReference>
<dbReference type="GO" id="GO:0016020">
    <property type="term" value="C:membrane"/>
    <property type="evidence" value="ECO:0007669"/>
    <property type="project" value="UniProtKB-SubCell"/>
</dbReference>
<proteinExistence type="inferred from homology"/>
<organism>
    <name type="scientific">Saccharomyces cerevisiae (strain RM11-1a)</name>
    <name type="common">Baker's yeast</name>
    <dbReference type="NCBI Taxonomy" id="285006"/>
    <lineage>
        <taxon>Eukaryota</taxon>
        <taxon>Fungi</taxon>
        <taxon>Dikarya</taxon>
        <taxon>Ascomycota</taxon>
        <taxon>Saccharomycotina</taxon>
        <taxon>Saccharomycetes</taxon>
        <taxon>Saccharomycetales</taxon>
        <taxon>Saccharomycetaceae</taxon>
        <taxon>Saccharomyces</taxon>
    </lineage>
</organism>
<evidence type="ECO:0000255" key="1"/>
<evidence type="ECO:0000256" key="2">
    <source>
        <dbReference type="SAM" id="MobiDB-lite"/>
    </source>
</evidence>
<evidence type="ECO:0000305" key="3"/>